<comment type="function">
    <text evidence="1">Self-assembles to form an icosahedral capsid with a T=16 symmetry, about 200 nm in diameter, and consisting of 150 hexons and 12 pentons (total of 162 capsomers). Hexons form the edges and faces of the capsid and are each composed of six MCP molecules. In contrast, one penton is found at each of the 12 vertices. Eleven of the pentons are MCP pentamers, while the last vertex is occupied by the portal complex. The capsid is surrounded by a layer of proteinaceous material designated the tegument which, in turn, is enclosed in an envelope of host cell-derived lipids containing virus-encoded glycoproteins.</text>
</comment>
<comment type="subunit">
    <text evidence="1">Homomultimer. Makes the hexons and eleven out of twelve pentons. Interacts with triplex proteins 1/TRX1 and 2/TRX2; adjacent capsomers are linked together in groups of three by triplexes, heterotrimeric complexes composed of one molecule of TRX1 and two molecules of TRX2. Interacts with scaffold protein; this interaction allows efficient MCP transport to the host nucleus. Interacts with capsid vertex component 2/CVC2. Interacts with the small capsomere-interacting protein/SCP.</text>
</comment>
<comment type="subcellular location">
    <subcellularLocation>
        <location evidence="1">Virion</location>
    </subcellularLocation>
    <subcellularLocation>
        <location evidence="1">Host nucleus</location>
    </subcellularLocation>
</comment>
<comment type="similarity">
    <text evidence="1">Belongs to the herpesviridae major capsid protein family.</text>
</comment>
<keyword id="KW-0167">Capsid protein</keyword>
<keyword id="KW-1048">Host nucleus</keyword>
<keyword id="KW-1147">T=16 icosahedral capsid protein</keyword>
<keyword id="KW-0946">Virion</keyword>
<sequence length="1376" mass="152211">MDRRSEAFKIPVPEVIPAGQILSTIEVSSHRTLFDFFKQIRSDDNGLYAAQFDVLLGTYCNTLTLVRFLELGLSVSCVCTKFPELNYVNDGTIQFEVQQPMIARDGPHPVDQPTHTYMMKHIEQRSLSAAFAIAAEALGLIGGTTLDGTQISSSLRVRAIQQLARNVQTVLDSFERGTADQLLRVLLEKAPPLTLLAPLQIYRDEGRLASRVNRAVLVSELKRRVIEDTFFLTKHERNRKELVVARLAELVNCTAPSVAVTRMTHSDTKGRPVDGVVVTTAGVRQRLLQGILTLEDMAADVPVTYGEMMITGTNLVTALVMGKAVRNLDDVAHHLLGMQRDQVRANEKLIKDYEDVPSTARVRADLVLVGDRLVFLEALEKRVYQATNVPYPLVGNLDLTFIIPLGIFKPATDRYSRHAGSFTPTPGQPDPRTYPPQTVYFFNKDGNLVQLSFDSAAGTVCHSSFLDVDSVLVAIRREPHELHCAFGAYVTLPPAGTLLDQMRRFFERWHMLMPARPRWTAEALMTIDQLLSPGNANLRLELHPAFDFFVAPADVVIPGPFDMPNVMPTVMAMPRLINGNIPLPLCPVEFRDSRGFELSVDRHRLNPATVLAVRGAFRDANYPMVFYILEAVIHGSERTFCALARLIIQCIVSYWRNTHQVAFVNNFYMIMYINAYLGNGELPEECTAIYRDLLEHVQALRRLVAEYTVPGEAVGGQGHDALNNVLLDPALLPPLIWDCDPILHRADMGRARAQELWVDGVDYAAIPWVEMAEVNFGNTGGHLVHNRPIRGENKRNPIVPHHDPEWSVLSKIYYYAVVPAFSRGNCCTMGVRYDRVYPLVQTVVIPDLGAEEIAPTSPSDPRHPLNPRHLVPNTLNILFHNARVAVDTDALLLLQEVVTNMAERTTPVLATAAPDAGTATAVTQEMRTFDGTLHHGILMMAYQRNDETLLEGTFFYPAPVNALFACPEHLGALPGLNAEVLEAARDVPPVPHFFGGNYYATVRQPVAQHAVQSRADENTLTYALMAGYFKLGPIALSHQFATGFHPGFAFTVVRQDRFLTENILFAEKASESYFMGQLQVNRHEAVGGVNFVLTQPRANVDLGVGFTAAYAAAALRTPVTDMGNLPQNLYLTRGTIPMLDGDADAYLRRVVNTGNRLGPQGPRPIFGQLMPATPAGVAHGQAAVCEFIVTPVSADLNYFRRPCNPRGRSAGPVYACDGEADAVDVMYDHTQGDPAYPSRATVNPWASQRNSYGDRLYNGKYNLNGASPVYSPCFRFFTPTEVEAKGRNMTQLIADVGASVAPSTSNTEIQFKRPHGSTDLVEDPCSLFQEAYPLLSSTDTALLRTPHIGEIGADEGHFAQYLIRDESPLKGCFPRI</sequence>
<name>MCP_EHV1V</name>
<gene>
    <name evidence="1" type="primary">MCP</name>
    <name type="ordered locus">42</name>
</gene>
<reference key="1">
    <citation type="submission" date="2003-11" db="EMBL/GenBank/DDBJ databases">
        <authorList>
            <person name="Davis-Poynter N."/>
            <person name="Nugent J."/>
            <person name="Birch-Machin I."/>
            <person name="Allen G.P."/>
        </authorList>
    </citation>
    <scope>NUCLEOTIDE SEQUENCE [LARGE SCALE GENOMIC DNA]</scope>
</reference>
<protein>
    <recommendedName>
        <fullName evidence="1">Major capsid protein</fullName>
        <shortName evidence="1">MCP</shortName>
    </recommendedName>
</protein>
<organismHost>
    <name type="scientific">Equus caballus</name>
    <name type="common">Horse</name>
    <dbReference type="NCBI Taxonomy" id="9796"/>
</organismHost>
<organism>
    <name type="scientific">Equine herpesvirus 1 (strain V592)</name>
    <name type="common">EHV-1</name>
    <name type="synonym">Equine abortion virus</name>
    <dbReference type="NCBI Taxonomy" id="310273"/>
    <lineage>
        <taxon>Viruses</taxon>
        <taxon>Duplodnaviria</taxon>
        <taxon>Heunggongvirae</taxon>
        <taxon>Peploviricota</taxon>
        <taxon>Herviviricetes</taxon>
        <taxon>Herpesvirales</taxon>
        <taxon>Orthoherpesviridae</taxon>
        <taxon>Alphaherpesvirinae</taxon>
        <taxon>Varicellovirus</taxon>
        <taxon>Varicellovirus equidalpha1</taxon>
        <taxon>Equid alphaherpesvirus 1</taxon>
    </lineage>
</organism>
<proteinExistence type="inferred from homology"/>
<evidence type="ECO:0000255" key="1">
    <source>
        <dbReference type="HAMAP-Rule" id="MF_04016"/>
    </source>
</evidence>
<accession>Q6S6S9</accession>
<dbReference type="EMBL" id="AY464052">
    <property type="protein sequence ID" value="AAS45927.1"/>
    <property type="molecule type" value="Genomic_DNA"/>
</dbReference>
<dbReference type="SMR" id="Q6S6S9"/>
<dbReference type="Proteomes" id="UP000008296">
    <property type="component" value="Segment"/>
</dbReference>
<dbReference type="GO" id="GO:0042025">
    <property type="term" value="C:host cell nucleus"/>
    <property type="evidence" value="ECO:0007669"/>
    <property type="project" value="UniProtKB-SubCell"/>
</dbReference>
<dbReference type="GO" id="GO:0039622">
    <property type="term" value="C:T=16 icosahedral viral capsid"/>
    <property type="evidence" value="ECO:0007669"/>
    <property type="project" value="UniProtKB-KW"/>
</dbReference>
<dbReference type="GO" id="GO:0005198">
    <property type="term" value="F:structural molecule activity"/>
    <property type="evidence" value="ECO:0007669"/>
    <property type="project" value="InterPro"/>
</dbReference>
<dbReference type="HAMAP" id="MF_04016">
    <property type="entry name" value="HSV_MCP"/>
    <property type="match status" value="1"/>
</dbReference>
<dbReference type="InterPro" id="IPR000912">
    <property type="entry name" value="Herpes_MCP"/>
</dbReference>
<dbReference type="InterPro" id="IPR023233">
    <property type="entry name" value="Herpes_MCP_upper_sf"/>
</dbReference>
<dbReference type="Pfam" id="PF03122">
    <property type="entry name" value="Herpes_MCP"/>
    <property type="match status" value="1"/>
</dbReference>
<dbReference type="PRINTS" id="PR00235">
    <property type="entry name" value="HSVCAPSIDMCP"/>
</dbReference>
<dbReference type="SUPFAM" id="SSF103417">
    <property type="entry name" value="Major capsid protein VP5"/>
    <property type="match status" value="1"/>
</dbReference>
<feature type="chain" id="PRO_0000115704" description="Major capsid protein">
    <location>
        <begin position="1"/>
        <end position="1376"/>
    </location>
</feature>